<keyword id="KW-0066">ATP synthesis</keyword>
<keyword id="KW-0997">Cell inner membrane</keyword>
<keyword id="KW-1003">Cell membrane</keyword>
<keyword id="KW-0139">CF(1)</keyword>
<keyword id="KW-0375">Hydrogen ion transport</keyword>
<keyword id="KW-0406">Ion transport</keyword>
<keyword id="KW-0472">Membrane</keyword>
<keyword id="KW-1185">Reference proteome</keyword>
<keyword id="KW-0813">Transport</keyword>
<proteinExistence type="inferred from homology"/>
<name>ATPG_ECO27</name>
<dbReference type="EMBL" id="FM180568">
    <property type="protein sequence ID" value="CAS11591.1"/>
    <property type="molecule type" value="Genomic_DNA"/>
</dbReference>
<dbReference type="RefSeq" id="WP_000896498.1">
    <property type="nucleotide sequence ID" value="NC_011601.1"/>
</dbReference>
<dbReference type="SMR" id="B7UMJ8"/>
<dbReference type="GeneID" id="93778234"/>
<dbReference type="KEGG" id="ecg:E2348C_4043"/>
<dbReference type="HOGENOM" id="CLU_050669_0_1_6"/>
<dbReference type="Proteomes" id="UP000008205">
    <property type="component" value="Chromosome"/>
</dbReference>
<dbReference type="GO" id="GO:0005886">
    <property type="term" value="C:plasma membrane"/>
    <property type="evidence" value="ECO:0007669"/>
    <property type="project" value="UniProtKB-SubCell"/>
</dbReference>
<dbReference type="GO" id="GO:0045259">
    <property type="term" value="C:proton-transporting ATP synthase complex"/>
    <property type="evidence" value="ECO:0007669"/>
    <property type="project" value="UniProtKB-KW"/>
</dbReference>
<dbReference type="GO" id="GO:0005524">
    <property type="term" value="F:ATP binding"/>
    <property type="evidence" value="ECO:0007669"/>
    <property type="project" value="UniProtKB-UniRule"/>
</dbReference>
<dbReference type="GO" id="GO:0046933">
    <property type="term" value="F:proton-transporting ATP synthase activity, rotational mechanism"/>
    <property type="evidence" value="ECO:0007669"/>
    <property type="project" value="UniProtKB-UniRule"/>
</dbReference>
<dbReference type="GO" id="GO:0042777">
    <property type="term" value="P:proton motive force-driven plasma membrane ATP synthesis"/>
    <property type="evidence" value="ECO:0007669"/>
    <property type="project" value="UniProtKB-UniRule"/>
</dbReference>
<dbReference type="CDD" id="cd12151">
    <property type="entry name" value="F1-ATPase_gamma"/>
    <property type="match status" value="1"/>
</dbReference>
<dbReference type="FunFam" id="1.10.287.80:FF:000005">
    <property type="entry name" value="ATP synthase gamma chain"/>
    <property type="match status" value="2"/>
</dbReference>
<dbReference type="FunFam" id="3.40.1380.10:FF:000001">
    <property type="entry name" value="ATP synthase gamma chain"/>
    <property type="match status" value="1"/>
</dbReference>
<dbReference type="Gene3D" id="3.40.1380.10">
    <property type="match status" value="1"/>
</dbReference>
<dbReference type="Gene3D" id="1.10.287.80">
    <property type="entry name" value="ATP synthase, gamma subunit, helix hairpin domain"/>
    <property type="match status" value="1"/>
</dbReference>
<dbReference type="HAMAP" id="MF_00815">
    <property type="entry name" value="ATP_synth_gamma_bact"/>
    <property type="match status" value="1"/>
</dbReference>
<dbReference type="InterPro" id="IPR035968">
    <property type="entry name" value="ATP_synth_F1_ATPase_gsu"/>
</dbReference>
<dbReference type="InterPro" id="IPR000131">
    <property type="entry name" value="ATP_synth_F1_gsu"/>
</dbReference>
<dbReference type="InterPro" id="IPR023632">
    <property type="entry name" value="ATP_synth_F1_gsu_CS"/>
</dbReference>
<dbReference type="NCBIfam" id="TIGR01146">
    <property type="entry name" value="ATPsyn_F1gamma"/>
    <property type="match status" value="1"/>
</dbReference>
<dbReference type="NCBIfam" id="NF004144">
    <property type="entry name" value="PRK05621.1-1"/>
    <property type="match status" value="1"/>
</dbReference>
<dbReference type="PANTHER" id="PTHR11693">
    <property type="entry name" value="ATP SYNTHASE GAMMA CHAIN"/>
    <property type="match status" value="1"/>
</dbReference>
<dbReference type="PANTHER" id="PTHR11693:SF22">
    <property type="entry name" value="ATP SYNTHASE SUBUNIT GAMMA, MITOCHONDRIAL"/>
    <property type="match status" value="1"/>
</dbReference>
<dbReference type="Pfam" id="PF00231">
    <property type="entry name" value="ATP-synt"/>
    <property type="match status" value="1"/>
</dbReference>
<dbReference type="PRINTS" id="PR00126">
    <property type="entry name" value="ATPASEGAMMA"/>
</dbReference>
<dbReference type="SUPFAM" id="SSF52943">
    <property type="entry name" value="ATP synthase (F1-ATPase), gamma subunit"/>
    <property type="match status" value="1"/>
</dbReference>
<dbReference type="PROSITE" id="PS00153">
    <property type="entry name" value="ATPASE_GAMMA"/>
    <property type="match status" value="1"/>
</dbReference>
<accession>B7UMJ8</accession>
<sequence length="287" mass="31577">MAGAKEIRSKIASVQNTQKITKAMEMVAASKMRKSQDRMAASRPYAETMRKVIGHLAHGNLEYKHPYLEDRDVKRVGYLVVSTDRGLCGGLNINLFKKLLAEMKTWTDKGVQCDLAMIGSKGVSFFNSVGGNVVAQVTGMGDNPSLSELIGPVKVMLQAYDEGRLDKLYIVSNKFINTMSQVPTISQLLPLPASDDDDLKHKSWDYLYEPDPKALLDTLLRRYVESQVYQGVVENLASEQAARMVAMKAATDNGGSLIKELQLVYNKARQASITQELTEIVSGAAAV</sequence>
<reference key="1">
    <citation type="journal article" date="2009" name="J. Bacteriol.">
        <title>Complete genome sequence and comparative genome analysis of enteropathogenic Escherichia coli O127:H6 strain E2348/69.</title>
        <authorList>
            <person name="Iguchi A."/>
            <person name="Thomson N.R."/>
            <person name="Ogura Y."/>
            <person name="Saunders D."/>
            <person name="Ooka T."/>
            <person name="Henderson I.R."/>
            <person name="Harris D."/>
            <person name="Asadulghani M."/>
            <person name="Kurokawa K."/>
            <person name="Dean P."/>
            <person name="Kenny B."/>
            <person name="Quail M.A."/>
            <person name="Thurston S."/>
            <person name="Dougan G."/>
            <person name="Hayashi T."/>
            <person name="Parkhill J."/>
            <person name="Frankel G."/>
        </authorList>
    </citation>
    <scope>NUCLEOTIDE SEQUENCE [LARGE SCALE GENOMIC DNA]</scope>
    <source>
        <strain>E2348/69 / EPEC</strain>
    </source>
</reference>
<comment type="function">
    <text evidence="1">Produces ATP from ADP in the presence of a proton gradient across the membrane. The gamma chain is believed to be important in regulating ATPase activity and the flow of protons through the CF(0) complex.</text>
</comment>
<comment type="subunit">
    <text evidence="1">F-type ATPases have 2 components, CF(1) - the catalytic core - and CF(0) - the membrane proton channel. CF(1) has five subunits: alpha(3), beta(3), gamma(1), delta(1), epsilon(1). CF(0) has three main subunits: a, b and c.</text>
</comment>
<comment type="subcellular location">
    <subcellularLocation>
        <location evidence="1">Cell inner membrane</location>
        <topology evidence="1">Peripheral membrane protein</topology>
    </subcellularLocation>
</comment>
<comment type="similarity">
    <text evidence="1">Belongs to the ATPase gamma chain family.</text>
</comment>
<gene>
    <name evidence="1" type="primary">atpG</name>
    <name type="ordered locus">E2348C_4043</name>
</gene>
<evidence type="ECO:0000255" key="1">
    <source>
        <dbReference type="HAMAP-Rule" id="MF_00815"/>
    </source>
</evidence>
<protein>
    <recommendedName>
        <fullName evidence="1">ATP synthase gamma chain</fullName>
    </recommendedName>
    <alternativeName>
        <fullName evidence="1">ATP synthase F1 sector gamma subunit</fullName>
    </alternativeName>
    <alternativeName>
        <fullName evidence="1">F-ATPase gamma subunit</fullName>
    </alternativeName>
</protein>
<feature type="chain" id="PRO_1000148617" description="ATP synthase gamma chain">
    <location>
        <begin position="1"/>
        <end position="287"/>
    </location>
</feature>
<organism>
    <name type="scientific">Escherichia coli O127:H6 (strain E2348/69 / EPEC)</name>
    <dbReference type="NCBI Taxonomy" id="574521"/>
    <lineage>
        <taxon>Bacteria</taxon>
        <taxon>Pseudomonadati</taxon>
        <taxon>Pseudomonadota</taxon>
        <taxon>Gammaproteobacteria</taxon>
        <taxon>Enterobacterales</taxon>
        <taxon>Enterobacteriaceae</taxon>
        <taxon>Escherichia</taxon>
    </lineage>
</organism>